<comment type="subcellular location">
    <subcellularLocation>
        <location evidence="5">Cell membrane</location>
        <topology evidence="5">Single-pass membrane protein</topology>
    </subcellularLocation>
</comment>
<comment type="similarity">
    <text evidence="5">Belongs to the peptidase S41A family.</text>
</comment>
<dbReference type="EC" id="3.4.21.-"/>
<dbReference type="EMBL" id="AP008934">
    <property type="protein sequence ID" value="BAE18464.1"/>
    <property type="molecule type" value="Genomic_DNA"/>
</dbReference>
<dbReference type="RefSeq" id="WP_011303100.1">
    <property type="nucleotide sequence ID" value="NZ_MTGA01000038.1"/>
</dbReference>
<dbReference type="SMR" id="Q49XN1"/>
<dbReference type="GeneID" id="3616559"/>
<dbReference type="KEGG" id="ssp:SSP1319"/>
<dbReference type="PATRIC" id="fig|342451.11.peg.1321"/>
<dbReference type="eggNOG" id="COG0793">
    <property type="taxonomic scope" value="Bacteria"/>
</dbReference>
<dbReference type="HOGENOM" id="CLU_017295_3_0_9"/>
<dbReference type="OrthoDB" id="9812068at2"/>
<dbReference type="Proteomes" id="UP000006371">
    <property type="component" value="Chromosome"/>
</dbReference>
<dbReference type="GO" id="GO:0030288">
    <property type="term" value="C:outer membrane-bounded periplasmic space"/>
    <property type="evidence" value="ECO:0007669"/>
    <property type="project" value="TreeGrafter"/>
</dbReference>
<dbReference type="GO" id="GO:0005886">
    <property type="term" value="C:plasma membrane"/>
    <property type="evidence" value="ECO:0007669"/>
    <property type="project" value="UniProtKB-SubCell"/>
</dbReference>
<dbReference type="GO" id="GO:0004175">
    <property type="term" value="F:endopeptidase activity"/>
    <property type="evidence" value="ECO:0007669"/>
    <property type="project" value="TreeGrafter"/>
</dbReference>
<dbReference type="GO" id="GO:0008236">
    <property type="term" value="F:serine-type peptidase activity"/>
    <property type="evidence" value="ECO:0007669"/>
    <property type="project" value="UniProtKB-KW"/>
</dbReference>
<dbReference type="GO" id="GO:0006508">
    <property type="term" value="P:proteolysis"/>
    <property type="evidence" value="ECO:0007669"/>
    <property type="project" value="UniProtKB-KW"/>
</dbReference>
<dbReference type="GO" id="GO:0007165">
    <property type="term" value="P:signal transduction"/>
    <property type="evidence" value="ECO:0007669"/>
    <property type="project" value="TreeGrafter"/>
</dbReference>
<dbReference type="CDD" id="cd06782">
    <property type="entry name" value="cpPDZ_CPP-like"/>
    <property type="match status" value="1"/>
</dbReference>
<dbReference type="CDD" id="cd07560">
    <property type="entry name" value="Peptidase_S41_CPP"/>
    <property type="match status" value="1"/>
</dbReference>
<dbReference type="FunFam" id="2.30.42.10:FF:000063">
    <property type="entry name" value="Peptidase, S41 family"/>
    <property type="match status" value="1"/>
</dbReference>
<dbReference type="FunFam" id="3.30.750.44:FF:000001">
    <property type="entry name" value="S41 family peptidase"/>
    <property type="match status" value="1"/>
</dbReference>
<dbReference type="Gene3D" id="2.30.42.10">
    <property type="match status" value="1"/>
</dbReference>
<dbReference type="Gene3D" id="3.30.750.44">
    <property type="match status" value="1"/>
</dbReference>
<dbReference type="Gene3D" id="3.90.226.10">
    <property type="entry name" value="2-enoyl-CoA Hydratase, Chain A, domain 1"/>
    <property type="match status" value="1"/>
</dbReference>
<dbReference type="Gene3D" id="1.10.101.10">
    <property type="entry name" value="PGBD-like superfamily/PGBD"/>
    <property type="match status" value="1"/>
</dbReference>
<dbReference type="InterPro" id="IPR029045">
    <property type="entry name" value="ClpP/crotonase-like_dom_sf"/>
</dbReference>
<dbReference type="InterPro" id="IPR055210">
    <property type="entry name" value="CtpA/B_N"/>
</dbReference>
<dbReference type="InterPro" id="IPR001478">
    <property type="entry name" value="PDZ"/>
</dbReference>
<dbReference type="InterPro" id="IPR041489">
    <property type="entry name" value="PDZ_6"/>
</dbReference>
<dbReference type="InterPro" id="IPR036034">
    <property type="entry name" value="PDZ_sf"/>
</dbReference>
<dbReference type="InterPro" id="IPR004447">
    <property type="entry name" value="Peptidase_S41A"/>
</dbReference>
<dbReference type="InterPro" id="IPR002477">
    <property type="entry name" value="Peptidoglycan-bd-like"/>
</dbReference>
<dbReference type="InterPro" id="IPR036365">
    <property type="entry name" value="PGBD-like_sf"/>
</dbReference>
<dbReference type="InterPro" id="IPR036366">
    <property type="entry name" value="PGBDSf"/>
</dbReference>
<dbReference type="InterPro" id="IPR005151">
    <property type="entry name" value="Tail-specific_protease"/>
</dbReference>
<dbReference type="NCBIfam" id="TIGR00225">
    <property type="entry name" value="prc"/>
    <property type="match status" value="1"/>
</dbReference>
<dbReference type="PANTHER" id="PTHR32060:SF30">
    <property type="entry name" value="CARBOXY-TERMINAL PROCESSING PROTEASE CTPA"/>
    <property type="match status" value="1"/>
</dbReference>
<dbReference type="PANTHER" id="PTHR32060">
    <property type="entry name" value="TAIL-SPECIFIC PROTEASE"/>
    <property type="match status" value="1"/>
</dbReference>
<dbReference type="Pfam" id="PF22694">
    <property type="entry name" value="CtpB_N-like"/>
    <property type="match status" value="1"/>
</dbReference>
<dbReference type="Pfam" id="PF17820">
    <property type="entry name" value="PDZ_6"/>
    <property type="match status" value="1"/>
</dbReference>
<dbReference type="Pfam" id="PF03572">
    <property type="entry name" value="Peptidase_S41"/>
    <property type="match status" value="1"/>
</dbReference>
<dbReference type="Pfam" id="PF01471">
    <property type="entry name" value="PG_binding_1"/>
    <property type="match status" value="1"/>
</dbReference>
<dbReference type="SMART" id="SM00228">
    <property type="entry name" value="PDZ"/>
    <property type="match status" value="1"/>
</dbReference>
<dbReference type="SMART" id="SM00245">
    <property type="entry name" value="TSPc"/>
    <property type="match status" value="1"/>
</dbReference>
<dbReference type="SUPFAM" id="SSF52096">
    <property type="entry name" value="ClpP/crotonase"/>
    <property type="match status" value="1"/>
</dbReference>
<dbReference type="SUPFAM" id="SSF50156">
    <property type="entry name" value="PDZ domain-like"/>
    <property type="match status" value="1"/>
</dbReference>
<dbReference type="SUPFAM" id="SSF47090">
    <property type="entry name" value="PGBD-like"/>
    <property type="match status" value="1"/>
</dbReference>
<dbReference type="PROSITE" id="PS50106">
    <property type="entry name" value="PDZ"/>
    <property type="match status" value="1"/>
</dbReference>
<name>CTPAL_STAS1</name>
<evidence type="ECO:0000250" key="1"/>
<evidence type="ECO:0000255" key="2"/>
<evidence type="ECO:0000255" key="3">
    <source>
        <dbReference type="PROSITE-ProRule" id="PRU00143"/>
    </source>
</evidence>
<evidence type="ECO:0000256" key="4">
    <source>
        <dbReference type="SAM" id="MobiDB-lite"/>
    </source>
</evidence>
<evidence type="ECO:0000305" key="5"/>
<sequence length="491" mass="54652">MSESKDTTEVNQEVNEKASSQSTKKQINFKRSHFIIILIVTILVTAMIAVFATIGISHWTSGLNSDQRDEMKKVEQVYQTLDDEYYKDTSSEELGTAAIDGMVKKLDDPYSDYMTKKETKSFNEDVSGDFVGIGAEMQKKGNQIQITSPMKQSPAEKAGIQPKDVVTKVNGKSIKGQPLEAIVKKVRGKQGTKVTLTIERGGQAHDITIKRDKIHVKSVEYQKHGDVGVFTINKFQNSTSGELKSAIIKAHKDGIRKIVLDLRNNPGGLLDEAVKMANIFIDKNETVVQLEKGKHKEAIKASNDASKEAKDMDVSILVNKGSASASEVFTGAMKDYNKAKVYGSKTFGKGIVQTTREFEDGSLLKFTNMKWLTPKSHYIHGKGITPDKKIEEPAYQSLNVIPSNKTYQLGDDDKNVKTMKVGLNVLGYHINNHSTEFDSELEDALKSFQKKNNLDVNGTFNKSTNEKFTQQLVEKANKEDTVLNELLKKLN</sequence>
<organism>
    <name type="scientific">Staphylococcus saprophyticus subsp. saprophyticus (strain ATCC 15305 / DSM 20229 / NCIMB 8711 / NCTC 7292 / S-41)</name>
    <dbReference type="NCBI Taxonomy" id="342451"/>
    <lineage>
        <taxon>Bacteria</taxon>
        <taxon>Bacillati</taxon>
        <taxon>Bacillota</taxon>
        <taxon>Bacilli</taxon>
        <taxon>Bacillales</taxon>
        <taxon>Staphylococcaceae</taxon>
        <taxon>Staphylococcus</taxon>
    </lineage>
</organism>
<protein>
    <recommendedName>
        <fullName>Probable CtpA-like serine protease</fullName>
        <ecNumber>3.4.21.-</ecNumber>
    </recommendedName>
</protein>
<keyword id="KW-1003">Cell membrane</keyword>
<keyword id="KW-0378">Hydrolase</keyword>
<keyword id="KW-0472">Membrane</keyword>
<keyword id="KW-0645">Protease</keyword>
<keyword id="KW-1185">Reference proteome</keyword>
<keyword id="KW-0720">Serine protease</keyword>
<keyword id="KW-0812">Transmembrane</keyword>
<keyword id="KW-1133">Transmembrane helix</keyword>
<reference key="1">
    <citation type="journal article" date="2005" name="Proc. Natl. Acad. Sci. U.S.A.">
        <title>Whole genome sequence of Staphylococcus saprophyticus reveals the pathogenesis of uncomplicated urinary tract infection.</title>
        <authorList>
            <person name="Kuroda M."/>
            <person name="Yamashita A."/>
            <person name="Hirakawa H."/>
            <person name="Kumano M."/>
            <person name="Morikawa K."/>
            <person name="Higashide M."/>
            <person name="Maruyama A."/>
            <person name="Inose Y."/>
            <person name="Matoba K."/>
            <person name="Toh H."/>
            <person name="Kuhara S."/>
            <person name="Hattori M."/>
            <person name="Ohta T."/>
        </authorList>
    </citation>
    <scope>NUCLEOTIDE SEQUENCE [LARGE SCALE GENOMIC DNA]</scope>
    <source>
        <strain>ATCC 15305 / DSM 20229 / NCIMB 8711 / NCTC 7292 / S-41</strain>
    </source>
</reference>
<gene>
    <name type="ordered locus">SSP1319</name>
</gene>
<accession>Q49XN1</accession>
<proteinExistence type="inferred from homology"/>
<feature type="chain" id="PRO_0000233198" description="Probable CtpA-like serine protease">
    <location>
        <begin position="1"/>
        <end position="491"/>
    </location>
</feature>
<feature type="transmembrane region" description="Helical" evidence="2">
    <location>
        <begin position="34"/>
        <end position="54"/>
    </location>
</feature>
<feature type="domain" description="PDZ" evidence="3">
    <location>
        <begin position="119"/>
        <end position="201"/>
    </location>
</feature>
<feature type="region of interest" description="Disordered" evidence="4">
    <location>
        <begin position="1"/>
        <end position="22"/>
    </location>
</feature>
<feature type="compositionally biased region" description="Polar residues" evidence="4">
    <location>
        <begin position="9"/>
        <end position="22"/>
    </location>
</feature>
<feature type="active site" description="Charge relay system" evidence="1">
    <location>
        <position position="324"/>
    </location>
</feature>
<feature type="active site" description="Charge relay system" evidence="1">
    <location>
        <position position="335"/>
    </location>
</feature>
<feature type="active site" description="Charge relay system" evidence="1">
    <location>
        <position position="349"/>
    </location>
</feature>